<comment type="catalytic activity">
    <reaction evidence="1">
        <text>L-cysteine + L-glutamate + ATP = gamma-L-glutamyl-L-cysteine + ADP + phosphate + H(+)</text>
        <dbReference type="Rhea" id="RHEA:13285"/>
        <dbReference type="ChEBI" id="CHEBI:15378"/>
        <dbReference type="ChEBI" id="CHEBI:29985"/>
        <dbReference type="ChEBI" id="CHEBI:30616"/>
        <dbReference type="ChEBI" id="CHEBI:35235"/>
        <dbReference type="ChEBI" id="CHEBI:43474"/>
        <dbReference type="ChEBI" id="CHEBI:58173"/>
        <dbReference type="ChEBI" id="CHEBI:456216"/>
        <dbReference type="EC" id="6.3.2.2"/>
    </reaction>
</comment>
<comment type="pathway">
    <text evidence="1">Sulfur metabolism; glutathione biosynthesis; glutathione from L-cysteine and L-glutamate: step 1/2.</text>
</comment>
<comment type="similarity">
    <text evidence="1">Belongs to the glutamate--cysteine ligase type 1 family. Type 1 subfamily.</text>
</comment>
<organism>
    <name type="scientific">Bordetella bronchiseptica (strain ATCC BAA-588 / NCTC 13252 / RB50)</name>
    <name type="common">Alcaligenes bronchisepticus</name>
    <dbReference type="NCBI Taxonomy" id="257310"/>
    <lineage>
        <taxon>Bacteria</taxon>
        <taxon>Pseudomonadati</taxon>
        <taxon>Pseudomonadota</taxon>
        <taxon>Betaproteobacteria</taxon>
        <taxon>Burkholderiales</taxon>
        <taxon>Alcaligenaceae</taxon>
        <taxon>Bordetella</taxon>
    </lineage>
</organism>
<keyword id="KW-0067">ATP-binding</keyword>
<keyword id="KW-0317">Glutathione biosynthesis</keyword>
<keyword id="KW-0436">Ligase</keyword>
<keyword id="KW-0547">Nucleotide-binding</keyword>
<dbReference type="EC" id="6.3.2.2" evidence="1"/>
<dbReference type="EMBL" id="BX640450">
    <property type="protein sequence ID" value="CAE34923.1"/>
    <property type="molecule type" value="Genomic_DNA"/>
</dbReference>
<dbReference type="RefSeq" id="WP_003815271.1">
    <property type="nucleotide sequence ID" value="NC_002927.3"/>
</dbReference>
<dbReference type="SMR" id="Q7WES2"/>
<dbReference type="GeneID" id="56476941"/>
<dbReference type="KEGG" id="bbr:BB4560"/>
<dbReference type="eggNOG" id="COG2918">
    <property type="taxonomic scope" value="Bacteria"/>
</dbReference>
<dbReference type="HOGENOM" id="CLU_020728_3_0_4"/>
<dbReference type="UniPathway" id="UPA00142">
    <property type="reaction ID" value="UER00209"/>
</dbReference>
<dbReference type="Proteomes" id="UP000001027">
    <property type="component" value="Chromosome"/>
</dbReference>
<dbReference type="GO" id="GO:0005829">
    <property type="term" value="C:cytosol"/>
    <property type="evidence" value="ECO:0007669"/>
    <property type="project" value="TreeGrafter"/>
</dbReference>
<dbReference type="GO" id="GO:0005524">
    <property type="term" value="F:ATP binding"/>
    <property type="evidence" value="ECO:0007669"/>
    <property type="project" value="UniProtKB-KW"/>
</dbReference>
<dbReference type="GO" id="GO:0004357">
    <property type="term" value="F:glutamate-cysteine ligase activity"/>
    <property type="evidence" value="ECO:0007669"/>
    <property type="project" value="UniProtKB-UniRule"/>
</dbReference>
<dbReference type="GO" id="GO:0046872">
    <property type="term" value="F:metal ion binding"/>
    <property type="evidence" value="ECO:0007669"/>
    <property type="project" value="TreeGrafter"/>
</dbReference>
<dbReference type="GO" id="GO:0006750">
    <property type="term" value="P:glutathione biosynthetic process"/>
    <property type="evidence" value="ECO:0007669"/>
    <property type="project" value="UniProtKB-UniRule"/>
</dbReference>
<dbReference type="Gene3D" id="3.30.590.20">
    <property type="match status" value="1"/>
</dbReference>
<dbReference type="HAMAP" id="MF_00578">
    <property type="entry name" value="Glu_cys_ligase"/>
    <property type="match status" value="1"/>
</dbReference>
<dbReference type="InterPro" id="IPR014746">
    <property type="entry name" value="Gln_synth/guanido_kin_cat_dom"/>
</dbReference>
<dbReference type="InterPro" id="IPR007370">
    <property type="entry name" value="Glu_cys_ligase"/>
</dbReference>
<dbReference type="InterPro" id="IPR006334">
    <property type="entry name" value="Glut_cys_ligase"/>
</dbReference>
<dbReference type="NCBIfam" id="TIGR01434">
    <property type="entry name" value="glu_cys_ligase"/>
    <property type="match status" value="1"/>
</dbReference>
<dbReference type="PANTHER" id="PTHR38761">
    <property type="entry name" value="GLUTAMATE--CYSTEINE LIGASE"/>
    <property type="match status" value="1"/>
</dbReference>
<dbReference type="PANTHER" id="PTHR38761:SF1">
    <property type="entry name" value="GLUTAMATE--CYSTEINE LIGASE"/>
    <property type="match status" value="1"/>
</dbReference>
<dbReference type="Pfam" id="PF04262">
    <property type="entry name" value="Glu_cys_ligase"/>
    <property type="match status" value="1"/>
</dbReference>
<dbReference type="SUPFAM" id="SSF55931">
    <property type="entry name" value="Glutamine synthetase/guanido kinase"/>
    <property type="match status" value="1"/>
</dbReference>
<name>GSH1_BORBR</name>
<gene>
    <name evidence="1" type="primary">gshA</name>
    <name type="ordered locus">BB4560</name>
</gene>
<sequence length="527" mass="58848">MTDTAAQRHHRLQAHADLLTQTLRGIEKEGLRVDHQGVLARTAHPAGLGAALTNAHVTTDYSEALLELITGTHTDVDSLLGELRDTHRYVYGVLEGEYIWNQSMPATLPPEADIPIAWYGTSNTGMLKHVYRRGLAERYGKTMQCIAGVHYNFSLPDALWDVLVPDAPTPQARRSRGYISLIRNFTRYSWLLMYLFGSAPALAREFMRGRDHLLETLDPSTLYLPYATSLRMSDLGYQNKAQSRLKLCYNDLDTFLGRLYEAVTEPWPAYQAIGTRRDGQWIQLNTNVLQIENEYYSSIRPKRATGRCERPITALAERGVQYVEVRCLDIDPLTPEGISAETARFVDAFLLFCATSDSPFFPDNGYCQRSADNFAVVVKEGRKPGLMLDREGQAVSVPQWGHELLDQIAPYAALYDQALGGDAYAAALAAQRAKLDQPDLTPSARVLAALREGNVSFHDYSLDLSRRHADALRAQPLPAERTQAYAEAARQSVAEQLRLEQSDAVDFDTYVAHYHAALKNPLPSTAS</sequence>
<evidence type="ECO:0000255" key="1">
    <source>
        <dbReference type="HAMAP-Rule" id="MF_00578"/>
    </source>
</evidence>
<protein>
    <recommendedName>
        <fullName evidence="1">Glutamate--cysteine ligase</fullName>
        <ecNumber evidence="1">6.3.2.2</ecNumber>
    </recommendedName>
    <alternativeName>
        <fullName evidence="1">Gamma-ECS</fullName>
        <shortName evidence="1">GCS</shortName>
    </alternativeName>
    <alternativeName>
        <fullName evidence="1">Gamma-glutamylcysteine synthetase</fullName>
    </alternativeName>
</protein>
<accession>Q7WES2</accession>
<feature type="chain" id="PRO_0000192518" description="Glutamate--cysteine ligase">
    <location>
        <begin position="1"/>
        <end position="527"/>
    </location>
</feature>
<reference key="1">
    <citation type="journal article" date="2003" name="Nat. Genet.">
        <title>Comparative analysis of the genome sequences of Bordetella pertussis, Bordetella parapertussis and Bordetella bronchiseptica.</title>
        <authorList>
            <person name="Parkhill J."/>
            <person name="Sebaihia M."/>
            <person name="Preston A."/>
            <person name="Murphy L.D."/>
            <person name="Thomson N.R."/>
            <person name="Harris D.E."/>
            <person name="Holden M.T.G."/>
            <person name="Churcher C.M."/>
            <person name="Bentley S.D."/>
            <person name="Mungall K.L."/>
            <person name="Cerdeno-Tarraga A.-M."/>
            <person name="Temple L."/>
            <person name="James K.D."/>
            <person name="Harris B."/>
            <person name="Quail M.A."/>
            <person name="Achtman M."/>
            <person name="Atkin R."/>
            <person name="Baker S."/>
            <person name="Basham D."/>
            <person name="Bason N."/>
            <person name="Cherevach I."/>
            <person name="Chillingworth T."/>
            <person name="Collins M."/>
            <person name="Cronin A."/>
            <person name="Davis P."/>
            <person name="Doggett J."/>
            <person name="Feltwell T."/>
            <person name="Goble A."/>
            <person name="Hamlin N."/>
            <person name="Hauser H."/>
            <person name="Holroyd S."/>
            <person name="Jagels K."/>
            <person name="Leather S."/>
            <person name="Moule S."/>
            <person name="Norberczak H."/>
            <person name="O'Neil S."/>
            <person name="Ormond D."/>
            <person name="Price C."/>
            <person name="Rabbinowitsch E."/>
            <person name="Rutter S."/>
            <person name="Sanders M."/>
            <person name="Saunders D."/>
            <person name="Seeger K."/>
            <person name="Sharp S."/>
            <person name="Simmonds M."/>
            <person name="Skelton J."/>
            <person name="Squares R."/>
            <person name="Squares S."/>
            <person name="Stevens K."/>
            <person name="Unwin L."/>
            <person name="Whitehead S."/>
            <person name="Barrell B.G."/>
            <person name="Maskell D.J."/>
        </authorList>
    </citation>
    <scope>NUCLEOTIDE SEQUENCE [LARGE SCALE GENOMIC DNA]</scope>
    <source>
        <strain>ATCC BAA-588 / NCTC 13252 / RB50</strain>
    </source>
</reference>
<proteinExistence type="inferred from homology"/>